<keyword id="KW-0997">Cell inner membrane</keyword>
<keyword id="KW-1003">Cell membrane</keyword>
<keyword id="KW-0472">Membrane</keyword>
<keyword id="KW-0812">Transmembrane</keyword>
<keyword id="KW-1133">Transmembrane helix</keyword>
<protein>
    <recommendedName>
        <fullName evidence="1">Inner membrane-spanning protein YciB</fullName>
    </recommendedName>
</protein>
<feature type="chain" id="PRO_1000021001" description="Inner membrane-spanning protein YciB">
    <location>
        <begin position="1"/>
        <end position="176"/>
    </location>
</feature>
<feature type="transmembrane region" description="Helical" evidence="1">
    <location>
        <begin position="3"/>
        <end position="23"/>
    </location>
</feature>
<feature type="transmembrane region" description="Helical" evidence="1">
    <location>
        <begin position="24"/>
        <end position="44"/>
    </location>
</feature>
<feature type="transmembrane region" description="Helical" evidence="1">
    <location>
        <begin position="49"/>
        <end position="69"/>
    </location>
</feature>
<feature type="transmembrane region" description="Helical" evidence="1">
    <location>
        <begin position="81"/>
        <end position="101"/>
    </location>
</feature>
<feature type="transmembrane region" description="Helical" evidence="1">
    <location>
        <begin position="121"/>
        <end position="141"/>
    </location>
</feature>
<feature type="transmembrane region" description="Helical" evidence="1">
    <location>
        <begin position="149"/>
        <end position="169"/>
    </location>
</feature>
<dbReference type="EMBL" id="CP000614">
    <property type="protein sequence ID" value="ABO54845.1"/>
    <property type="molecule type" value="Genomic_DNA"/>
</dbReference>
<dbReference type="KEGG" id="bvi:Bcep1808_1842"/>
<dbReference type="eggNOG" id="COG2917">
    <property type="taxonomic scope" value="Bacteria"/>
</dbReference>
<dbReference type="HOGENOM" id="CLU_089554_2_0_4"/>
<dbReference type="Proteomes" id="UP000002287">
    <property type="component" value="Chromosome 1"/>
</dbReference>
<dbReference type="GO" id="GO:0005886">
    <property type="term" value="C:plasma membrane"/>
    <property type="evidence" value="ECO:0007669"/>
    <property type="project" value="UniProtKB-SubCell"/>
</dbReference>
<dbReference type="HAMAP" id="MF_00189">
    <property type="entry name" value="YciB"/>
    <property type="match status" value="1"/>
</dbReference>
<dbReference type="InterPro" id="IPR006008">
    <property type="entry name" value="YciB"/>
</dbReference>
<dbReference type="NCBIfam" id="TIGR00997">
    <property type="entry name" value="ispZ"/>
    <property type="match status" value="1"/>
</dbReference>
<dbReference type="NCBIfam" id="NF001325">
    <property type="entry name" value="PRK00259.1-3"/>
    <property type="match status" value="1"/>
</dbReference>
<dbReference type="PANTHER" id="PTHR36917:SF1">
    <property type="entry name" value="INNER MEMBRANE-SPANNING PROTEIN YCIB"/>
    <property type="match status" value="1"/>
</dbReference>
<dbReference type="PANTHER" id="PTHR36917">
    <property type="entry name" value="INTRACELLULAR SEPTATION PROTEIN A-RELATED"/>
    <property type="match status" value="1"/>
</dbReference>
<dbReference type="Pfam" id="PF04279">
    <property type="entry name" value="IspA"/>
    <property type="match status" value="1"/>
</dbReference>
<gene>
    <name evidence="1" type="primary">yciB</name>
    <name type="ordered locus">Bcep1808_1842</name>
</gene>
<reference key="1">
    <citation type="submission" date="2007-03" db="EMBL/GenBank/DDBJ databases">
        <title>Complete sequence of chromosome 1 of Burkholderia vietnamiensis G4.</title>
        <authorList>
            <consortium name="US DOE Joint Genome Institute"/>
            <person name="Copeland A."/>
            <person name="Lucas S."/>
            <person name="Lapidus A."/>
            <person name="Barry K."/>
            <person name="Detter J.C."/>
            <person name="Glavina del Rio T."/>
            <person name="Hammon N."/>
            <person name="Israni S."/>
            <person name="Dalin E."/>
            <person name="Tice H."/>
            <person name="Pitluck S."/>
            <person name="Chain P."/>
            <person name="Malfatti S."/>
            <person name="Shin M."/>
            <person name="Vergez L."/>
            <person name="Schmutz J."/>
            <person name="Larimer F."/>
            <person name="Land M."/>
            <person name="Hauser L."/>
            <person name="Kyrpides N."/>
            <person name="Tiedje J."/>
            <person name="Richardson P."/>
        </authorList>
    </citation>
    <scope>NUCLEOTIDE SEQUENCE [LARGE SCALE GENOMIC DNA]</scope>
    <source>
        <strain>G4 / LMG 22486</strain>
    </source>
</reference>
<organism>
    <name type="scientific">Burkholderia vietnamiensis (strain G4 / LMG 22486)</name>
    <name type="common">Burkholderia cepacia (strain R1808)</name>
    <dbReference type="NCBI Taxonomy" id="269482"/>
    <lineage>
        <taxon>Bacteria</taxon>
        <taxon>Pseudomonadati</taxon>
        <taxon>Pseudomonadota</taxon>
        <taxon>Betaproteobacteria</taxon>
        <taxon>Burkholderiales</taxon>
        <taxon>Burkholderiaceae</taxon>
        <taxon>Burkholderia</taxon>
        <taxon>Burkholderia cepacia complex</taxon>
    </lineage>
</organism>
<name>YCIB_BURVG</name>
<proteinExistence type="inferred from homology"/>
<sequence>MKFLFDLFPIILFFAAFKVWGIFTATAVAIVATLAQVAWVAFRHRKVDTMLWVSLGVIVVFGGATLVLHDEKFIQWKPTVLYWLFAIGLLAARYAFGNNLIEKMMGKQLTLPHPVWDKLNVAWALFFAVLGLANLYVVHNFTESQWVNFKLFGTTGAMVVFIILQSLWLTKYLKDE</sequence>
<comment type="function">
    <text evidence="1">Plays a role in cell envelope biogenesis, maintenance of cell envelope integrity and membrane homeostasis.</text>
</comment>
<comment type="subcellular location">
    <subcellularLocation>
        <location evidence="1">Cell inner membrane</location>
        <topology evidence="1">Multi-pass membrane protein</topology>
    </subcellularLocation>
</comment>
<comment type="similarity">
    <text evidence="1">Belongs to the YciB family.</text>
</comment>
<evidence type="ECO:0000255" key="1">
    <source>
        <dbReference type="HAMAP-Rule" id="MF_00189"/>
    </source>
</evidence>
<accession>A4JEZ2</accession>